<evidence type="ECO:0000250" key="1"/>
<evidence type="ECO:0000255" key="2">
    <source>
        <dbReference type="PROSITE-ProRule" id="PRU00284"/>
    </source>
</evidence>
<evidence type="ECO:0000305" key="3"/>
<keyword id="KW-0997">Cell inner membrane</keyword>
<keyword id="KW-1003">Cell membrane</keyword>
<keyword id="KW-0472">Membrane</keyword>
<keyword id="KW-0488">Methylation</keyword>
<keyword id="KW-1185">Reference proteome</keyword>
<keyword id="KW-0807">Transducer</keyword>
<gene>
    <name type="primary">tcpI</name>
    <name type="synonym">tagB</name>
    <name type="ordered locus">VC_0825</name>
</gene>
<accession>P0C6D8</accession>
<accession>P29486</accession>
<accession>Q9KTR5</accession>
<proteinExistence type="inferred from homology"/>
<sequence length="620" mass="69028">MIKKIISVFLLLACIITLAFTAFFYHSKLSDQTKSISSLSSQQAQERLQSYQDSLDFYKKLNTSLSVAIANSLRDKAVEELNAIALRIQENHGFIGVTFASLDGTMFTDIGTLDWNAKTLRRDWFVKTVELGTKHYTAFDIDKTTGQHVLTIATPVYVGNDIVGSVALDIAGDQIASPNGSGMFMMTDRNFNVFASDLTHSTLIGKDLTKEKPLFKNLVSGQYVTFSDADSHWFAVSQTEIDGENKLFTIIDIQQIVQTYKRDIQLIIAGFSGFSCVMLIGLYWVLSKELSGVRQIREWILALSDGQIKERRPIKFHNELDTIAQSLENLQFRLLDVVRNSHRTMNDLSIKQTDITYSIEGNTNNSQQELGLIEQVATATTQLSCTSFDVMQQAQSAELNAETAQKLIAESHDIIDSSSKQTEMVTLSIHESQQIINQLREFSDNISSVTDVINNISDQTNLLALNAAIEAARAGEQGRGFAVVADEVRSLAVKTQQSTIDIQGIILKLQEQSQLADQVMTRNVSLIHETQVANRALIASFNLISDKVLEISNINSIVSTAANEQKIVTEDVAKQMEDIRYLVQENLSAMERTKQANQNISDLTTNLNDALSFFKIELTS</sequence>
<reference key="1">
    <citation type="journal article" date="2000" name="Nature">
        <title>DNA sequence of both chromosomes of the cholera pathogen Vibrio cholerae.</title>
        <authorList>
            <person name="Heidelberg J.F."/>
            <person name="Eisen J.A."/>
            <person name="Nelson W.C."/>
            <person name="Clayton R.A."/>
            <person name="Gwinn M.L."/>
            <person name="Dodson R.J."/>
            <person name="Haft D.H."/>
            <person name="Hickey E.K."/>
            <person name="Peterson J.D."/>
            <person name="Umayam L.A."/>
            <person name="Gill S.R."/>
            <person name="Nelson K.E."/>
            <person name="Read T.D."/>
            <person name="Tettelin H."/>
            <person name="Richardson D.L."/>
            <person name="Ermolaeva M.D."/>
            <person name="Vamathevan J.J."/>
            <person name="Bass S."/>
            <person name="Qin H."/>
            <person name="Dragoi I."/>
            <person name="Sellers P."/>
            <person name="McDonald L.A."/>
            <person name="Utterback T.R."/>
            <person name="Fleischmann R.D."/>
            <person name="Nierman W.C."/>
            <person name="White O."/>
            <person name="Salzberg S.L."/>
            <person name="Smith H.O."/>
            <person name="Colwell R.R."/>
            <person name="Mekalanos J.J."/>
            <person name="Venter J.C."/>
            <person name="Fraser C.M."/>
        </authorList>
    </citation>
    <scope>NUCLEOTIDE SEQUENCE [LARGE SCALE GENOMIC DNA]</scope>
    <source>
        <strain>ATCC 39315 / El Tor Inaba N16961</strain>
    </source>
</reference>
<reference key="2">
    <citation type="journal article" date="1996" name="Gene">
        <title>Comparison of the promoter proximal regions of the toxin-co-regulated tcp gene cluster in classical and El Tor strains of Vibrio cholerae O1.</title>
        <authorList>
            <person name="Ogierman M.A."/>
            <person name="Voss E."/>
            <person name="Meaney C."/>
            <person name="Faast R."/>
            <person name="Attridge S.R."/>
            <person name="Manning P.A."/>
        </authorList>
    </citation>
    <scope>NUCLEOTIDE SEQUENCE [GENOMIC DNA] OF 1-406</scope>
    <source>
        <strain>Classical Inaba Z17561 / Serotype O1</strain>
    </source>
</reference>
<feature type="chain" id="PRO_0000110563" description="Toxin coregulated pilus biosynthesis protein I">
    <location>
        <begin position="1"/>
        <end position="620"/>
    </location>
</feature>
<feature type="domain" description="Methyl-accepting transducer" evidence="2">
    <location>
        <begin position="344"/>
        <end position="580"/>
    </location>
</feature>
<feature type="sequence conflict" description="In Ref. 2; CAA45452." evidence="3" ref="2">
    <original>L</original>
    <variation>S</variation>
    <location>
        <position position="18"/>
    </location>
</feature>
<feature type="sequence conflict" description="In Ref. 2; CAA45452." evidence="3" ref="2">
    <original>T</original>
    <variation>I</variation>
    <location>
        <position position="63"/>
    </location>
</feature>
<feature type="sequence conflict" description="In Ref. 2; CAA45452." evidence="3" ref="2">
    <original>A</original>
    <variation>S</variation>
    <location>
        <position position="302"/>
    </location>
</feature>
<feature type="sequence conflict" description="In Ref. 2; CAA45452." evidence="3" ref="2">
    <original>ETAQK</original>
    <variation>RRPKN</variation>
    <location>
        <begin position="402"/>
        <end position="406"/>
    </location>
</feature>
<organism>
    <name type="scientific">Vibrio cholerae serotype O1 (strain ATCC 39315 / El Tor Inaba N16961)</name>
    <dbReference type="NCBI Taxonomy" id="243277"/>
    <lineage>
        <taxon>Bacteria</taxon>
        <taxon>Pseudomonadati</taxon>
        <taxon>Pseudomonadota</taxon>
        <taxon>Gammaproteobacteria</taxon>
        <taxon>Vibrionales</taxon>
        <taxon>Vibrionaceae</taxon>
        <taxon>Vibrio</taxon>
    </lineage>
</organism>
<comment type="function">
    <text evidence="1">May function as an environmental regulator of TCP biogenesis. Negatively regulates the synthesis of the major pilin subunit of TCP (TcpA) (By similarity).</text>
</comment>
<comment type="subcellular location">
    <subcellularLocation>
        <location evidence="1">Cell inner membrane</location>
        <topology evidence="1">Peripheral membrane protein</topology>
    </subcellularLocation>
</comment>
<comment type="similarity">
    <text evidence="3">Belongs to the methyl-accepting chemotaxis (MCP) protein family.</text>
</comment>
<dbReference type="EMBL" id="AE003852">
    <property type="protein sequence ID" value="AAF93988.1"/>
    <property type="molecule type" value="Genomic_DNA"/>
</dbReference>
<dbReference type="EMBL" id="X64098">
    <property type="protein sequence ID" value="CAA45452.1"/>
    <property type="molecule type" value="Genomic_DNA"/>
</dbReference>
<dbReference type="PIR" id="D82274">
    <property type="entry name" value="D82274"/>
</dbReference>
<dbReference type="RefSeq" id="NP_230473.1">
    <property type="nucleotide sequence ID" value="NC_002505.1"/>
</dbReference>
<dbReference type="RefSeq" id="WP_000591844.1">
    <property type="nucleotide sequence ID" value="NZ_LT906614.1"/>
</dbReference>
<dbReference type="SMR" id="P0C6D8"/>
<dbReference type="STRING" id="243277.VC_0825"/>
<dbReference type="DNASU" id="2614492"/>
<dbReference type="EnsemblBacteria" id="AAF93988">
    <property type="protein sequence ID" value="AAF93988"/>
    <property type="gene ID" value="VC_0825"/>
</dbReference>
<dbReference type="KEGG" id="vch:VC_0825"/>
<dbReference type="PATRIC" id="fig|243277.26.peg.786"/>
<dbReference type="eggNOG" id="COG0840">
    <property type="taxonomic scope" value="Bacteria"/>
</dbReference>
<dbReference type="HOGENOM" id="CLU_000445_107_19_6"/>
<dbReference type="Proteomes" id="UP000000584">
    <property type="component" value="Chromosome 1"/>
</dbReference>
<dbReference type="GO" id="GO:0005886">
    <property type="term" value="C:plasma membrane"/>
    <property type="evidence" value="ECO:0007669"/>
    <property type="project" value="UniProtKB-SubCell"/>
</dbReference>
<dbReference type="GO" id="GO:0006935">
    <property type="term" value="P:chemotaxis"/>
    <property type="evidence" value="ECO:0000318"/>
    <property type="project" value="GO_Central"/>
</dbReference>
<dbReference type="GO" id="GO:0007165">
    <property type="term" value="P:signal transduction"/>
    <property type="evidence" value="ECO:0007669"/>
    <property type="project" value="UniProtKB-KW"/>
</dbReference>
<dbReference type="CDD" id="cd11386">
    <property type="entry name" value="MCP_signal"/>
    <property type="match status" value="1"/>
</dbReference>
<dbReference type="FunFam" id="1.10.287.950:FF:000001">
    <property type="entry name" value="Methyl-accepting chemotaxis sensory transducer"/>
    <property type="match status" value="1"/>
</dbReference>
<dbReference type="Gene3D" id="1.10.287.950">
    <property type="entry name" value="Methyl-accepting chemotaxis protein"/>
    <property type="match status" value="1"/>
</dbReference>
<dbReference type="Gene3D" id="3.30.450.20">
    <property type="entry name" value="PAS domain"/>
    <property type="match status" value="1"/>
</dbReference>
<dbReference type="InterPro" id="IPR004089">
    <property type="entry name" value="MCPsignal_dom"/>
</dbReference>
<dbReference type="InterPro" id="IPR029151">
    <property type="entry name" value="Sensor-like_sf"/>
</dbReference>
<dbReference type="PANTHER" id="PTHR32089">
    <property type="entry name" value="METHYL-ACCEPTING CHEMOTAXIS PROTEIN MCPB"/>
    <property type="match status" value="1"/>
</dbReference>
<dbReference type="PANTHER" id="PTHR32089:SF33">
    <property type="entry name" value="TOXIN COREGULATED PILUS BIOSYNTHESIS PROTEIN I"/>
    <property type="match status" value="1"/>
</dbReference>
<dbReference type="Pfam" id="PF00015">
    <property type="entry name" value="MCPsignal"/>
    <property type="match status" value="1"/>
</dbReference>
<dbReference type="SMART" id="SM00283">
    <property type="entry name" value="MA"/>
    <property type="match status" value="1"/>
</dbReference>
<dbReference type="SUPFAM" id="SSF58104">
    <property type="entry name" value="Methyl-accepting chemotaxis protein (MCP) signaling domain"/>
    <property type="match status" value="1"/>
</dbReference>
<dbReference type="SUPFAM" id="SSF103190">
    <property type="entry name" value="Sensory domain-like"/>
    <property type="match status" value="1"/>
</dbReference>
<dbReference type="PROSITE" id="PS50111">
    <property type="entry name" value="CHEMOTAXIS_TRANSDUC_2"/>
    <property type="match status" value="1"/>
</dbReference>
<name>TCPI_VIBCH</name>
<protein>
    <recommendedName>
        <fullName>Toxin coregulated pilus biosynthesis protein I</fullName>
    </recommendedName>
    <alternativeName>
        <fullName>TCP pilus biosynthesis protein TcpI</fullName>
    </alternativeName>
</protein>